<evidence type="ECO:0000255" key="1">
    <source>
        <dbReference type="HAMAP-Rule" id="MF_01307"/>
    </source>
</evidence>
<evidence type="ECO:0000305" key="2"/>
<sequence length="176" mass="18792">MSKVKKNDETLSEVLVDVNRVTKVVKGGRSFAFSAYVVVGDKAGRVGAGHGKAKEVNEARGKAKQAAKKRMMKVPLYQNRTIHHDVVGKSGAAKVILRRAKAGTGIIAGGSMRAIFDSLGVHDIVAKSIGSTNVYAMISATFDALNKLASPKSIAMRRDKKVNEISVKSADIQVNE</sequence>
<protein>
    <recommendedName>
        <fullName evidence="1">Small ribosomal subunit protein uS5</fullName>
    </recommendedName>
    <alternativeName>
        <fullName evidence="2">30S ribosomal protein S5</fullName>
    </alternativeName>
</protein>
<organism>
    <name type="scientific">Rickettsia africae (strain ESF-5)</name>
    <dbReference type="NCBI Taxonomy" id="347255"/>
    <lineage>
        <taxon>Bacteria</taxon>
        <taxon>Pseudomonadati</taxon>
        <taxon>Pseudomonadota</taxon>
        <taxon>Alphaproteobacteria</taxon>
        <taxon>Rickettsiales</taxon>
        <taxon>Rickettsiaceae</taxon>
        <taxon>Rickettsieae</taxon>
        <taxon>Rickettsia</taxon>
        <taxon>spotted fever group</taxon>
    </lineage>
</organism>
<gene>
    <name evidence="1" type="primary">rpsE</name>
    <name type="ordered locus">RAF_ORF0895</name>
</gene>
<keyword id="KW-0687">Ribonucleoprotein</keyword>
<keyword id="KW-0689">Ribosomal protein</keyword>
<keyword id="KW-0694">RNA-binding</keyword>
<keyword id="KW-0699">rRNA-binding</keyword>
<name>RS5_RICAE</name>
<comment type="function">
    <text evidence="1">With S4 and S12 plays an important role in translational accuracy.</text>
</comment>
<comment type="function">
    <text evidence="1">Located at the back of the 30S subunit body where it stabilizes the conformation of the head with respect to the body.</text>
</comment>
<comment type="subunit">
    <text evidence="1">Part of the 30S ribosomal subunit. Contacts proteins S4 and S8.</text>
</comment>
<comment type="domain">
    <text>The N-terminal domain interacts with the head of the 30S subunit; the C-terminal domain interacts with the body and contacts protein S4. The interaction surface between S4 and S5 is involved in control of translational fidelity.</text>
</comment>
<comment type="similarity">
    <text evidence="1">Belongs to the universal ribosomal protein uS5 family.</text>
</comment>
<proteinExistence type="inferred from homology"/>
<accession>C3PP90</accession>
<dbReference type="EMBL" id="CP001612">
    <property type="protein sequence ID" value="ACP53750.1"/>
    <property type="molecule type" value="Genomic_DNA"/>
</dbReference>
<dbReference type="RefSeq" id="WP_004997826.1">
    <property type="nucleotide sequence ID" value="NC_012633.1"/>
</dbReference>
<dbReference type="SMR" id="C3PP90"/>
<dbReference type="GeneID" id="95361469"/>
<dbReference type="KEGG" id="raf:RAF_ORF0895"/>
<dbReference type="HOGENOM" id="CLU_065898_2_2_5"/>
<dbReference type="Proteomes" id="UP000002305">
    <property type="component" value="Chromosome"/>
</dbReference>
<dbReference type="GO" id="GO:0015935">
    <property type="term" value="C:small ribosomal subunit"/>
    <property type="evidence" value="ECO:0007669"/>
    <property type="project" value="InterPro"/>
</dbReference>
<dbReference type="GO" id="GO:0019843">
    <property type="term" value="F:rRNA binding"/>
    <property type="evidence" value="ECO:0007669"/>
    <property type="project" value="UniProtKB-UniRule"/>
</dbReference>
<dbReference type="GO" id="GO:0003735">
    <property type="term" value="F:structural constituent of ribosome"/>
    <property type="evidence" value="ECO:0007669"/>
    <property type="project" value="InterPro"/>
</dbReference>
<dbReference type="GO" id="GO:0006412">
    <property type="term" value="P:translation"/>
    <property type="evidence" value="ECO:0007669"/>
    <property type="project" value="UniProtKB-UniRule"/>
</dbReference>
<dbReference type="FunFam" id="3.30.230.10:FF:000002">
    <property type="entry name" value="30S ribosomal protein S5"/>
    <property type="match status" value="1"/>
</dbReference>
<dbReference type="Gene3D" id="3.30.160.20">
    <property type="match status" value="1"/>
</dbReference>
<dbReference type="Gene3D" id="3.30.230.10">
    <property type="match status" value="1"/>
</dbReference>
<dbReference type="HAMAP" id="MF_01307_B">
    <property type="entry name" value="Ribosomal_uS5_B"/>
    <property type="match status" value="1"/>
</dbReference>
<dbReference type="InterPro" id="IPR020568">
    <property type="entry name" value="Ribosomal_Su5_D2-typ_SF"/>
</dbReference>
<dbReference type="InterPro" id="IPR000851">
    <property type="entry name" value="Ribosomal_uS5"/>
</dbReference>
<dbReference type="InterPro" id="IPR005712">
    <property type="entry name" value="Ribosomal_uS5_bac-type"/>
</dbReference>
<dbReference type="InterPro" id="IPR005324">
    <property type="entry name" value="Ribosomal_uS5_C"/>
</dbReference>
<dbReference type="InterPro" id="IPR013810">
    <property type="entry name" value="Ribosomal_uS5_N"/>
</dbReference>
<dbReference type="InterPro" id="IPR018192">
    <property type="entry name" value="Ribosomal_uS5_N_CS"/>
</dbReference>
<dbReference type="InterPro" id="IPR014721">
    <property type="entry name" value="Ribsml_uS5_D2-typ_fold_subgr"/>
</dbReference>
<dbReference type="NCBIfam" id="TIGR01021">
    <property type="entry name" value="rpsE_bact"/>
    <property type="match status" value="1"/>
</dbReference>
<dbReference type="PANTHER" id="PTHR48277">
    <property type="entry name" value="MITOCHONDRIAL RIBOSOMAL PROTEIN S5"/>
    <property type="match status" value="1"/>
</dbReference>
<dbReference type="PANTHER" id="PTHR48277:SF1">
    <property type="entry name" value="MITOCHONDRIAL RIBOSOMAL PROTEIN S5"/>
    <property type="match status" value="1"/>
</dbReference>
<dbReference type="Pfam" id="PF00333">
    <property type="entry name" value="Ribosomal_S5"/>
    <property type="match status" value="1"/>
</dbReference>
<dbReference type="Pfam" id="PF03719">
    <property type="entry name" value="Ribosomal_S5_C"/>
    <property type="match status" value="1"/>
</dbReference>
<dbReference type="SUPFAM" id="SSF54768">
    <property type="entry name" value="dsRNA-binding domain-like"/>
    <property type="match status" value="1"/>
</dbReference>
<dbReference type="SUPFAM" id="SSF54211">
    <property type="entry name" value="Ribosomal protein S5 domain 2-like"/>
    <property type="match status" value="1"/>
</dbReference>
<dbReference type="PROSITE" id="PS00585">
    <property type="entry name" value="RIBOSOMAL_S5"/>
    <property type="match status" value="1"/>
</dbReference>
<dbReference type="PROSITE" id="PS50881">
    <property type="entry name" value="S5_DSRBD"/>
    <property type="match status" value="1"/>
</dbReference>
<feature type="chain" id="PRO_1000214324" description="Small ribosomal subunit protein uS5">
    <location>
        <begin position="1"/>
        <end position="176"/>
    </location>
</feature>
<feature type="domain" description="S5 DRBM" evidence="1">
    <location>
        <begin position="11"/>
        <end position="74"/>
    </location>
</feature>
<reference key="1">
    <citation type="journal article" date="2009" name="BMC Genomics">
        <title>Analysis of the Rickettsia africae genome reveals that virulence acquisition in Rickettsia species may be explained by genome reduction.</title>
        <authorList>
            <person name="Fournier P.-E."/>
            <person name="El Karkouri K."/>
            <person name="Leroy Q."/>
            <person name="Robert C."/>
            <person name="Giumelli B."/>
            <person name="Renesto P."/>
            <person name="Socolovschi C."/>
            <person name="Parola P."/>
            <person name="Audic S."/>
            <person name="Raoult D."/>
        </authorList>
    </citation>
    <scope>NUCLEOTIDE SEQUENCE [LARGE SCALE GENOMIC DNA]</scope>
    <source>
        <strain>ESF-5</strain>
    </source>
</reference>